<dbReference type="EMBL" id="AF338688">
    <property type="protein sequence ID" value="AAK21948.1"/>
    <property type="molecule type" value="Genomic_DNA"/>
</dbReference>
<dbReference type="EMBL" id="AF338689">
    <property type="protein sequence ID" value="AAK21949.1"/>
    <property type="molecule type" value="Genomic_DNA"/>
</dbReference>
<dbReference type="EMBL" id="AF338690">
    <property type="protein sequence ID" value="AAK21950.1"/>
    <property type="molecule type" value="Genomic_DNA"/>
</dbReference>
<dbReference type="EMBL" id="AF330808">
    <property type="protein sequence ID" value="AAL59437.1"/>
    <property type="molecule type" value="Genomic_DNA"/>
</dbReference>
<dbReference type="SMR" id="Q9B161"/>
<dbReference type="GO" id="GO:0005743">
    <property type="term" value="C:mitochondrial inner membrane"/>
    <property type="evidence" value="ECO:0007669"/>
    <property type="project" value="UniProtKB-SubCell"/>
</dbReference>
<dbReference type="GO" id="GO:0045275">
    <property type="term" value="C:respiratory chain complex III"/>
    <property type="evidence" value="ECO:0007669"/>
    <property type="project" value="InterPro"/>
</dbReference>
<dbReference type="GO" id="GO:0046872">
    <property type="term" value="F:metal ion binding"/>
    <property type="evidence" value="ECO:0007669"/>
    <property type="project" value="UniProtKB-KW"/>
</dbReference>
<dbReference type="GO" id="GO:0008121">
    <property type="term" value="F:ubiquinol-cytochrome-c reductase activity"/>
    <property type="evidence" value="ECO:0007669"/>
    <property type="project" value="InterPro"/>
</dbReference>
<dbReference type="GO" id="GO:0006122">
    <property type="term" value="P:mitochondrial electron transport, ubiquinol to cytochrome c"/>
    <property type="evidence" value="ECO:0007669"/>
    <property type="project" value="TreeGrafter"/>
</dbReference>
<dbReference type="CDD" id="cd00290">
    <property type="entry name" value="cytochrome_b_C"/>
    <property type="match status" value="1"/>
</dbReference>
<dbReference type="CDD" id="cd00284">
    <property type="entry name" value="Cytochrome_b_N"/>
    <property type="match status" value="1"/>
</dbReference>
<dbReference type="FunFam" id="1.20.810.10:FF:000002">
    <property type="entry name" value="Cytochrome b"/>
    <property type="match status" value="1"/>
</dbReference>
<dbReference type="Gene3D" id="1.20.810.10">
    <property type="entry name" value="Cytochrome Bc1 Complex, Chain C"/>
    <property type="match status" value="1"/>
</dbReference>
<dbReference type="InterPro" id="IPR005798">
    <property type="entry name" value="Cyt_b/b6_C"/>
</dbReference>
<dbReference type="InterPro" id="IPR036150">
    <property type="entry name" value="Cyt_b/b6_C_sf"/>
</dbReference>
<dbReference type="InterPro" id="IPR005797">
    <property type="entry name" value="Cyt_b/b6_N"/>
</dbReference>
<dbReference type="InterPro" id="IPR027387">
    <property type="entry name" value="Cytb/b6-like_sf"/>
</dbReference>
<dbReference type="InterPro" id="IPR030689">
    <property type="entry name" value="Cytochrome_b"/>
</dbReference>
<dbReference type="InterPro" id="IPR048260">
    <property type="entry name" value="Cytochrome_b_C_euk/bac"/>
</dbReference>
<dbReference type="InterPro" id="IPR048259">
    <property type="entry name" value="Cytochrome_b_N_euk/bac"/>
</dbReference>
<dbReference type="InterPro" id="IPR016174">
    <property type="entry name" value="Di-haem_cyt_TM"/>
</dbReference>
<dbReference type="PANTHER" id="PTHR19271">
    <property type="entry name" value="CYTOCHROME B"/>
    <property type="match status" value="1"/>
</dbReference>
<dbReference type="PANTHER" id="PTHR19271:SF16">
    <property type="entry name" value="CYTOCHROME B"/>
    <property type="match status" value="1"/>
</dbReference>
<dbReference type="Pfam" id="PF00032">
    <property type="entry name" value="Cytochrom_B_C"/>
    <property type="match status" value="1"/>
</dbReference>
<dbReference type="Pfam" id="PF00033">
    <property type="entry name" value="Cytochrome_B"/>
    <property type="match status" value="1"/>
</dbReference>
<dbReference type="PIRSF" id="PIRSF038885">
    <property type="entry name" value="COB"/>
    <property type="match status" value="1"/>
</dbReference>
<dbReference type="SUPFAM" id="SSF81648">
    <property type="entry name" value="a domain/subunit of cytochrome bc1 complex (Ubiquinol-cytochrome c reductase)"/>
    <property type="match status" value="1"/>
</dbReference>
<dbReference type="SUPFAM" id="SSF81342">
    <property type="entry name" value="Transmembrane di-heme cytochromes"/>
    <property type="match status" value="1"/>
</dbReference>
<dbReference type="PROSITE" id="PS51003">
    <property type="entry name" value="CYTB_CTER"/>
    <property type="match status" value="1"/>
</dbReference>
<dbReference type="PROSITE" id="PS51002">
    <property type="entry name" value="CYTB_NTER"/>
    <property type="match status" value="1"/>
</dbReference>
<feature type="chain" id="PRO_0000061207" description="Cytochrome b">
    <location>
        <begin position="1"/>
        <end position="379"/>
    </location>
</feature>
<feature type="transmembrane region" description="Helical" evidence="2">
    <location>
        <begin position="33"/>
        <end position="53"/>
    </location>
</feature>
<feature type="transmembrane region" description="Helical" evidence="2">
    <location>
        <begin position="77"/>
        <end position="98"/>
    </location>
</feature>
<feature type="transmembrane region" description="Helical" evidence="2">
    <location>
        <begin position="113"/>
        <end position="133"/>
    </location>
</feature>
<feature type="transmembrane region" description="Helical" evidence="2">
    <location>
        <begin position="178"/>
        <end position="198"/>
    </location>
</feature>
<feature type="transmembrane region" description="Helical" evidence="2">
    <location>
        <begin position="226"/>
        <end position="246"/>
    </location>
</feature>
<feature type="transmembrane region" description="Helical" evidence="2">
    <location>
        <begin position="288"/>
        <end position="308"/>
    </location>
</feature>
<feature type="transmembrane region" description="Helical" evidence="2">
    <location>
        <begin position="320"/>
        <end position="340"/>
    </location>
</feature>
<feature type="transmembrane region" description="Helical" evidence="2">
    <location>
        <begin position="347"/>
        <end position="367"/>
    </location>
</feature>
<feature type="binding site" description="axial binding residue" evidence="2">
    <location>
        <position position="83"/>
    </location>
    <ligand>
        <name>heme b</name>
        <dbReference type="ChEBI" id="CHEBI:60344"/>
        <label>b562</label>
    </ligand>
    <ligandPart>
        <name>Fe</name>
        <dbReference type="ChEBI" id="CHEBI:18248"/>
    </ligandPart>
</feature>
<feature type="binding site" description="axial binding residue" evidence="2">
    <location>
        <position position="97"/>
    </location>
    <ligand>
        <name>heme b</name>
        <dbReference type="ChEBI" id="CHEBI:60344"/>
        <label>b566</label>
    </ligand>
    <ligandPart>
        <name>Fe</name>
        <dbReference type="ChEBI" id="CHEBI:18248"/>
    </ligandPart>
</feature>
<feature type="binding site" description="axial binding residue" evidence="2">
    <location>
        <position position="182"/>
    </location>
    <ligand>
        <name>heme b</name>
        <dbReference type="ChEBI" id="CHEBI:60344"/>
        <label>b562</label>
    </ligand>
    <ligandPart>
        <name>Fe</name>
        <dbReference type="ChEBI" id="CHEBI:18248"/>
    </ligandPart>
</feature>
<feature type="binding site" description="axial binding residue" evidence="2">
    <location>
        <position position="196"/>
    </location>
    <ligand>
        <name>heme b</name>
        <dbReference type="ChEBI" id="CHEBI:60344"/>
        <label>b566</label>
    </ligand>
    <ligandPart>
        <name>Fe</name>
        <dbReference type="ChEBI" id="CHEBI:18248"/>
    </ligandPart>
</feature>
<feature type="binding site" evidence="2">
    <location>
        <position position="201"/>
    </location>
    <ligand>
        <name>a ubiquinone</name>
        <dbReference type="ChEBI" id="CHEBI:16389"/>
    </ligand>
</feature>
<geneLocation type="mitochondrion"/>
<organism>
    <name type="scientific">Mormoops megalophylla</name>
    <name type="common">Peters's ghost-faced bat</name>
    <dbReference type="NCBI Taxonomy" id="59460"/>
    <lineage>
        <taxon>Eukaryota</taxon>
        <taxon>Metazoa</taxon>
        <taxon>Chordata</taxon>
        <taxon>Craniata</taxon>
        <taxon>Vertebrata</taxon>
        <taxon>Euteleostomi</taxon>
        <taxon>Mammalia</taxon>
        <taxon>Eutheria</taxon>
        <taxon>Laurasiatheria</taxon>
        <taxon>Chiroptera</taxon>
        <taxon>Yangochiroptera</taxon>
        <taxon>Mormoopidae</taxon>
        <taxon>Mormoops</taxon>
    </lineage>
</organism>
<evidence type="ECO:0000250" key="1"/>
<evidence type="ECO:0000250" key="2">
    <source>
        <dbReference type="UniProtKB" id="P00157"/>
    </source>
</evidence>
<evidence type="ECO:0000255" key="3">
    <source>
        <dbReference type="PROSITE-ProRule" id="PRU00967"/>
    </source>
</evidence>
<evidence type="ECO:0000255" key="4">
    <source>
        <dbReference type="PROSITE-ProRule" id="PRU00968"/>
    </source>
</evidence>
<name>CYB_MORME</name>
<sequence length="379" mass="42669">MTNIRKTHPLLKIINTSFVDLPAPSSLSSWWNFGSLLGICLAVQILTGLFLAMHYTSDTATAFNSVTHICRDVNYGWVLRYLHANGASMFFICLYLHVGRGLYYGSYTYSETWNVGIILLFAVMATAFMGYVLPWGQMSFWGATVITNLLSAIPYIGTDLVQWIWGGFSVDKATLTRFFAFHFLLPFIISAMVMVHLLFLHETGSNNPTGIPSDPDMIPFHPYYTFKDILGFLLMLTALSTLVLFSPDLLGDPDNYTPANPLNTPPHIKPEWYFLFAYAILRSIPNKLGGVLALVMSILILAIIPLVHTSKQQSMIFRPLSQCLFWLLVADLLTLTWIGGQPVEHPYIIIGQTASILYFLIILILMPLISTMENHLLKW</sequence>
<protein>
    <recommendedName>
        <fullName>Cytochrome b</fullName>
    </recommendedName>
    <alternativeName>
        <fullName>Complex III subunit 3</fullName>
    </alternativeName>
    <alternativeName>
        <fullName>Complex III subunit III</fullName>
    </alternativeName>
    <alternativeName>
        <fullName>Cytochrome b-c1 complex subunit 3</fullName>
    </alternativeName>
    <alternativeName>
        <fullName>Ubiquinol-cytochrome-c reductase complex cytochrome b subunit</fullName>
    </alternativeName>
</protein>
<comment type="function">
    <text evidence="2">Component of the ubiquinol-cytochrome c reductase complex (complex III or cytochrome b-c1 complex) that is part of the mitochondrial respiratory chain. The b-c1 complex mediates electron transfer from ubiquinol to cytochrome c. Contributes to the generation of a proton gradient across the mitochondrial membrane that is then used for ATP synthesis.</text>
</comment>
<comment type="cofactor">
    <cofactor evidence="2">
        <name>heme b</name>
        <dbReference type="ChEBI" id="CHEBI:60344"/>
    </cofactor>
    <text evidence="2">Binds 2 heme b groups non-covalently.</text>
</comment>
<comment type="subunit">
    <text evidence="2">The cytochrome bc1 complex contains 11 subunits: 3 respiratory subunits (MT-CYB, CYC1 and UQCRFS1), 2 core proteins (UQCRC1 and UQCRC2) and 6 low-molecular weight proteins (UQCRH/QCR6, UQCRB/QCR7, UQCRQ/QCR8, UQCR10/QCR9, UQCR11/QCR10 and a cleavage product of UQCRFS1). This cytochrome bc1 complex then forms a dimer.</text>
</comment>
<comment type="subcellular location">
    <subcellularLocation>
        <location evidence="2">Mitochondrion inner membrane</location>
        <topology evidence="2">Multi-pass membrane protein</topology>
    </subcellularLocation>
</comment>
<comment type="miscellaneous">
    <text evidence="1">Heme 1 (or BL or b562) is low-potential and absorbs at about 562 nm, and heme 2 (or BH or b566) is high-potential and absorbs at about 566 nm.</text>
</comment>
<comment type="similarity">
    <text evidence="3 4">Belongs to the cytochrome b family.</text>
</comment>
<comment type="caution">
    <text evidence="2">The full-length protein contains only eight transmembrane helices, not nine as predicted by bioinformatics tools.</text>
</comment>
<reference key="1">
    <citation type="journal article" date="2001" name="Mol. Phylogenet. Evol.">
        <title>Molecular systematics of the family Mormoopidae (Chiroptera) based on cytochrome b and recombination activating gene 2 sequences.</title>
        <authorList>
            <person name="Lewis-Oritt N."/>
            <person name="Porter C.A."/>
            <person name="Baker R.J."/>
        </authorList>
    </citation>
    <scope>NUCLEOTIDE SEQUENCE [GENOMIC DNA]</scope>
    <source>
        <strain>Isolate TK 19311</strain>
        <strain>Isolate TK 31432</strain>
        <strain>Isolate TK 4833</strain>
    </source>
</reference>
<reference key="2">
    <citation type="journal article" date="2001" name="J. Mammal.">
        <title>Molecular evidence for evolution of piscivory in Noctilio (Chiroptera: Noctilionidae).</title>
        <authorList>
            <person name="Lewis-Oritt N."/>
            <person name="Van Den Bussche R.A."/>
            <person name="Baker R.J."/>
        </authorList>
    </citation>
    <scope>NUCLEOTIDE SEQUENCE [GENOMIC DNA]</scope>
    <source>
        <strain>Isolate TK 27640</strain>
    </source>
</reference>
<accession>Q9B161</accession>
<keyword id="KW-0249">Electron transport</keyword>
<keyword id="KW-0349">Heme</keyword>
<keyword id="KW-0408">Iron</keyword>
<keyword id="KW-0472">Membrane</keyword>
<keyword id="KW-0479">Metal-binding</keyword>
<keyword id="KW-0496">Mitochondrion</keyword>
<keyword id="KW-0999">Mitochondrion inner membrane</keyword>
<keyword id="KW-0679">Respiratory chain</keyword>
<keyword id="KW-0812">Transmembrane</keyword>
<keyword id="KW-1133">Transmembrane helix</keyword>
<keyword id="KW-0813">Transport</keyword>
<keyword id="KW-0830">Ubiquinone</keyword>
<proteinExistence type="inferred from homology"/>
<gene>
    <name type="primary">MT-CYB</name>
    <name type="synonym">COB</name>
    <name type="synonym">CYTB</name>
    <name type="synonym">MTCYB</name>
</gene>